<accession>Q8L9A0</accession>
<accession>O65556</accession>
<accession>Q0WRT4</accession>
<accession>Q9B7N7</accession>
<gene>
    <name evidence="6" type="primary">RPL21M</name>
    <name evidence="7" type="synonym">NFD1</name>
    <name evidence="10" type="ordered locus">At4g30930</name>
    <name type="ORF">F6I18.160</name>
</gene>
<name>RM21_ARATH</name>
<keyword id="KW-0002">3D-structure</keyword>
<keyword id="KW-0217">Developmental protein</keyword>
<keyword id="KW-0278">Fertilization</keyword>
<keyword id="KW-0415">Karyogamy</keyword>
<keyword id="KW-0496">Mitochondrion</keyword>
<keyword id="KW-1185">Reference proteome</keyword>
<keyword id="KW-0687">Ribonucleoprotein</keyword>
<keyword id="KW-0689">Ribosomal protein</keyword>
<keyword id="KW-0694">RNA-binding</keyword>
<keyword id="KW-0699">rRNA-binding</keyword>
<keyword id="KW-0809">Transit peptide</keyword>
<comment type="function">
    <text evidence="1 5">This protein binds to 23S ribosomal RNA in the presence of protein L20 (By similarity). Required for karyogamy during female gametophyte development, when the two polar nuclei fuse to form the diploid central cell nucleus, and during double fertilization of the egg cell and the central cell (PubMed:16698901).</text>
</comment>
<comment type="subunit">
    <text evidence="9">Component of the mitochondrial ribosome large subunit.</text>
</comment>
<comment type="subcellular location">
    <subcellularLocation>
        <location evidence="5">Mitochondrion</location>
    </subcellularLocation>
</comment>
<comment type="tissue specificity">
    <text evidence="4 5">Constitutively expressed in roots, stems, leaves, flowers, pistils and siliques.</text>
</comment>
<comment type="disruption phenotype">
    <text evidence="5">Failure of fusion of the polar nuclei during megagametogenesis and abnormal double fertilization; fails to undergo fusion of the outer nuclear membranes.</text>
</comment>
<comment type="similarity">
    <text evidence="9">Belongs to the bacterial ribosomal protein bL21 family.</text>
</comment>
<comment type="sequence caution" evidence="9">
    <conflict type="erroneous gene model prediction">
        <sequence resource="EMBL-CDS" id="CAA18200"/>
    </conflict>
    <text>The predicted gene At4g30930 has been split into 2 genes: At4g30930 and At4g30935.</text>
</comment>
<comment type="sequence caution" evidence="9">
    <conflict type="erroneous gene model prediction">
        <sequence resource="EMBL-CDS" id="CAB79811"/>
    </conflict>
    <text>The predicted gene At4g30930 has been split into 2 genes: At4g30930 and At4g30935.</text>
</comment>
<sequence>MASLRCFRELSRRATTVFSINQTRSISSFHGIEFSGTSISHGTVIPNRSLTRNLPWYSHWYRSQDRCFSSNTKDTDEDEESSEGEDDDEEEGEDFEDSADMEVEREYSPAEKVEEAEEIGYKVMGPLKPSERLFKPYEPVFAIVQIGSHQFKVSNGDSIFTEKLKFCDINDKLELTKVLLLGSASQTIIGRPILPDATVHAVVEEHALDEKVLIFKKKRRKNYRRTRGHRQELTKLRITDIQGIEKPEPKIVHKPSKEAVTEQTKAELVA</sequence>
<organism>
    <name type="scientific">Arabidopsis thaliana</name>
    <name type="common">Mouse-ear cress</name>
    <dbReference type="NCBI Taxonomy" id="3702"/>
    <lineage>
        <taxon>Eukaryota</taxon>
        <taxon>Viridiplantae</taxon>
        <taxon>Streptophyta</taxon>
        <taxon>Embryophyta</taxon>
        <taxon>Tracheophyta</taxon>
        <taxon>Spermatophyta</taxon>
        <taxon>Magnoliopsida</taxon>
        <taxon>eudicotyledons</taxon>
        <taxon>Gunneridae</taxon>
        <taxon>Pentapetalae</taxon>
        <taxon>rosids</taxon>
        <taxon>malvids</taxon>
        <taxon>Brassicales</taxon>
        <taxon>Brassicaceae</taxon>
        <taxon>Camelineae</taxon>
        <taxon>Arabidopsis</taxon>
    </lineage>
</organism>
<dbReference type="EMBL" id="AJ278909">
    <property type="protein sequence ID" value="CAC27453.1"/>
    <property type="molecule type" value="Genomic_DNA"/>
</dbReference>
<dbReference type="EMBL" id="AL022198">
    <property type="protein sequence ID" value="CAA18200.1"/>
    <property type="status" value="ALT_SEQ"/>
    <property type="molecule type" value="Genomic_DNA"/>
</dbReference>
<dbReference type="EMBL" id="AL161578">
    <property type="protein sequence ID" value="CAB79811.1"/>
    <property type="status" value="ALT_SEQ"/>
    <property type="molecule type" value="Genomic_DNA"/>
</dbReference>
<dbReference type="EMBL" id="CP002687">
    <property type="protein sequence ID" value="AEE85831.1"/>
    <property type="molecule type" value="Genomic_DNA"/>
</dbReference>
<dbReference type="EMBL" id="BT005870">
    <property type="protein sequence ID" value="AAO64805.1"/>
    <property type="molecule type" value="mRNA"/>
</dbReference>
<dbReference type="EMBL" id="AK228212">
    <property type="protein sequence ID" value="BAF00165.1"/>
    <property type="molecule type" value="mRNA"/>
</dbReference>
<dbReference type="EMBL" id="AY088563">
    <property type="protein sequence ID" value="AAM66095.1"/>
    <property type="molecule type" value="mRNA"/>
</dbReference>
<dbReference type="EMBL" id="AB493710">
    <property type="protein sequence ID" value="BAH30548.1"/>
    <property type="molecule type" value="mRNA"/>
</dbReference>
<dbReference type="PIR" id="B85362">
    <property type="entry name" value="B85362"/>
</dbReference>
<dbReference type="RefSeq" id="NP_567861.1">
    <property type="nucleotide sequence ID" value="NM_119240.4"/>
</dbReference>
<dbReference type="PDB" id="6XYW">
    <property type="method" value="EM"/>
    <property type="resolution" value="3.86 A"/>
    <property type="chains" value="Ar=1-270"/>
</dbReference>
<dbReference type="PDBsum" id="6XYW"/>
<dbReference type="EMDB" id="EMD-10654"/>
<dbReference type="SMR" id="Q8L9A0"/>
<dbReference type="BioGRID" id="14504">
    <property type="interactions" value="5"/>
</dbReference>
<dbReference type="FunCoup" id="Q8L9A0">
    <property type="interactions" value="2245"/>
</dbReference>
<dbReference type="IntAct" id="Q8L9A0">
    <property type="interactions" value="2"/>
</dbReference>
<dbReference type="STRING" id="3702.Q8L9A0"/>
<dbReference type="iPTMnet" id="Q8L9A0"/>
<dbReference type="PaxDb" id="3702-AT4G30930.1"/>
<dbReference type="ProteomicsDB" id="228176"/>
<dbReference type="EnsemblPlants" id="AT4G30930.1">
    <property type="protein sequence ID" value="AT4G30930.1"/>
    <property type="gene ID" value="AT4G30930"/>
</dbReference>
<dbReference type="GeneID" id="829217"/>
<dbReference type="Gramene" id="AT4G30930.1">
    <property type="protein sequence ID" value="AT4G30930.1"/>
    <property type="gene ID" value="AT4G30930"/>
</dbReference>
<dbReference type="KEGG" id="ath:AT4G30930"/>
<dbReference type="Araport" id="AT4G30930"/>
<dbReference type="TAIR" id="AT4G30930">
    <property type="gene designation" value="NFD1"/>
</dbReference>
<dbReference type="eggNOG" id="KOG1686">
    <property type="taxonomic scope" value="Eukaryota"/>
</dbReference>
<dbReference type="HOGENOM" id="CLU_061463_4_0_1"/>
<dbReference type="InParanoid" id="Q8L9A0"/>
<dbReference type="OMA" id="NRRCLHA"/>
<dbReference type="PhylomeDB" id="Q8L9A0"/>
<dbReference type="PRO" id="PR:Q8L9A0"/>
<dbReference type="Proteomes" id="UP000006548">
    <property type="component" value="Chromosome 4"/>
</dbReference>
<dbReference type="ExpressionAtlas" id="Q8L9A0">
    <property type="expression patterns" value="baseline and differential"/>
</dbReference>
<dbReference type="GO" id="GO:0005739">
    <property type="term" value="C:mitochondrion"/>
    <property type="evidence" value="ECO:0000314"/>
    <property type="project" value="TAIR"/>
</dbReference>
<dbReference type="GO" id="GO:0005886">
    <property type="term" value="C:plasma membrane"/>
    <property type="evidence" value="ECO:0007005"/>
    <property type="project" value="TAIR"/>
</dbReference>
<dbReference type="GO" id="GO:1990904">
    <property type="term" value="C:ribonucleoprotein complex"/>
    <property type="evidence" value="ECO:0007669"/>
    <property type="project" value="UniProtKB-KW"/>
</dbReference>
<dbReference type="GO" id="GO:0005840">
    <property type="term" value="C:ribosome"/>
    <property type="evidence" value="ECO:0007669"/>
    <property type="project" value="UniProtKB-KW"/>
</dbReference>
<dbReference type="GO" id="GO:0019843">
    <property type="term" value="F:rRNA binding"/>
    <property type="evidence" value="ECO:0007669"/>
    <property type="project" value="UniProtKB-KW"/>
</dbReference>
<dbReference type="GO" id="GO:0003735">
    <property type="term" value="F:structural constituent of ribosome"/>
    <property type="evidence" value="ECO:0007669"/>
    <property type="project" value="InterPro"/>
</dbReference>
<dbReference type="GO" id="GO:0000976">
    <property type="term" value="F:transcription cis-regulatory region binding"/>
    <property type="evidence" value="ECO:0000353"/>
    <property type="project" value="TAIR"/>
</dbReference>
<dbReference type="GO" id="GO:0009567">
    <property type="term" value="P:double fertilization forming a zygote and endosperm"/>
    <property type="evidence" value="ECO:0000315"/>
    <property type="project" value="TAIR"/>
</dbReference>
<dbReference type="GO" id="GO:0009553">
    <property type="term" value="P:embryo sac development"/>
    <property type="evidence" value="ECO:0000315"/>
    <property type="project" value="TAIR"/>
</dbReference>
<dbReference type="GO" id="GO:0000741">
    <property type="term" value="P:karyogamy"/>
    <property type="evidence" value="ECO:0000315"/>
    <property type="project" value="TAIR"/>
</dbReference>
<dbReference type="GO" id="GO:0010197">
    <property type="term" value="P:polar nucleus fusion"/>
    <property type="evidence" value="ECO:0000315"/>
    <property type="project" value="UniProtKB"/>
</dbReference>
<dbReference type="GO" id="GO:0009555">
    <property type="term" value="P:pollen development"/>
    <property type="evidence" value="ECO:0000315"/>
    <property type="project" value="TAIR"/>
</dbReference>
<dbReference type="GO" id="GO:0006412">
    <property type="term" value="P:translation"/>
    <property type="evidence" value="ECO:0007669"/>
    <property type="project" value="InterPro"/>
</dbReference>
<dbReference type="HAMAP" id="MF_01363">
    <property type="entry name" value="Ribosomal_bL21"/>
    <property type="match status" value="1"/>
</dbReference>
<dbReference type="InterPro" id="IPR028909">
    <property type="entry name" value="bL21-like"/>
</dbReference>
<dbReference type="InterPro" id="IPR036164">
    <property type="entry name" value="bL21-like_sf"/>
</dbReference>
<dbReference type="InterPro" id="IPR001787">
    <property type="entry name" value="Ribosomal_bL21"/>
</dbReference>
<dbReference type="InterPro" id="IPR018258">
    <property type="entry name" value="Ribosomal_bL21_CS"/>
</dbReference>
<dbReference type="NCBIfam" id="TIGR00061">
    <property type="entry name" value="L21"/>
    <property type="match status" value="1"/>
</dbReference>
<dbReference type="PANTHER" id="PTHR21349">
    <property type="entry name" value="50S RIBOSOMAL PROTEIN L21"/>
    <property type="match status" value="1"/>
</dbReference>
<dbReference type="PANTHER" id="PTHR21349:SF0">
    <property type="entry name" value="LARGE RIBOSOMAL SUBUNIT PROTEIN BL21M"/>
    <property type="match status" value="1"/>
</dbReference>
<dbReference type="Pfam" id="PF00829">
    <property type="entry name" value="Ribosomal_L21p"/>
    <property type="match status" value="1"/>
</dbReference>
<dbReference type="SUPFAM" id="SSF141091">
    <property type="entry name" value="L21p-like"/>
    <property type="match status" value="1"/>
</dbReference>
<dbReference type="PROSITE" id="PS01169">
    <property type="entry name" value="RIBOSOMAL_L21"/>
    <property type="match status" value="1"/>
</dbReference>
<protein>
    <recommendedName>
        <fullName evidence="8">Large ribosomal subunit protein bL21m</fullName>
    </recommendedName>
    <alternativeName>
        <fullName evidence="6">50S ribosomal protein L21, mitochondrial</fullName>
    </alternativeName>
    <alternativeName>
        <fullName evidence="7">Protein NUCLEAR FUSION DEFECTIVE 1</fullName>
    </alternativeName>
</protein>
<reference key="1">
    <citation type="journal article" date="2001" name="Gene">
        <title>The Arabidopsis chloroplast ribosomal protein L21 is encoded by a nuclear gene of mitochondrial origin.</title>
        <authorList>
            <person name="Gallois J.-L."/>
            <person name="Achard P."/>
            <person name="Green G."/>
            <person name="Mache R."/>
        </authorList>
    </citation>
    <scope>NUCLEOTIDE SEQUENCE [GENOMIC DNA]</scope>
    <scope>TISSUE SPECIFICITY</scope>
    <source>
        <strain>cv. Columbia</strain>
    </source>
</reference>
<reference key="2">
    <citation type="journal article" date="1999" name="Nature">
        <title>Sequence and analysis of chromosome 4 of the plant Arabidopsis thaliana.</title>
        <authorList>
            <person name="Mayer K.F.X."/>
            <person name="Schueller C."/>
            <person name="Wambutt R."/>
            <person name="Murphy G."/>
            <person name="Volckaert G."/>
            <person name="Pohl T."/>
            <person name="Duesterhoeft A."/>
            <person name="Stiekema W."/>
            <person name="Entian K.-D."/>
            <person name="Terryn N."/>
            <person name="Harris B."/>
            <person name="Ansorge W."/>
            <person name="Brandt P."/>
            <person name="Grivell L.A."/>
            <person name="Rieger M."/>
            <person name="Weichselgartner M."/>
            <person name="de Simone V."/>
            <person name="Obermaier B."/>
            <person name="Mache R."/>
            <person name="Mueller M."/>
            <person name="Kreis M."/>
            <person name="Delseny M."/>
            <person name="Puigdomenech P."/>
            <person name="Watson M."/>
            <person name="Schmidtheini T."/>
            <person name="Reichert B."/>
            <person name="Portetelle D."/>
            <person name="Perez-Alonso M."/>
            <person name="Boutry M."/>
            <person name="Bancroft I."/>
            <person name="Vos P."/>
            <person name="Hoheisel J."/>
            <person name="Zimmermann W."/>
            <person name="Wedler H."/>
            <person name="Ridley P."/>
            <person name="Langham S.-A."/>
            <person name="McCullagh B."/>
            <person name="Bilham L."/>
            <person name="Robben J."/>
            <person name="van der Schueren J."/>
            <person name="Grymonprez B."/>
            <person name="Chuang Y.-J."/>
            <person name="Vandenbussche F."/>
            <person name="Braeken M."/>
            <person name="Weltjens I."/>
            <person name="Voet M."/>
            <person name="Bastiaens I."/>
            <person name="Aert R."/>
            <person name="Defoor E."/>
            <person name="Weitzenegger T."/>
            <person name="Bothe G."/>
            <person name="Ramsperger U."/>
            <person name="Hilbert H."/>
            <person name="Braun M."/>
            <person name="Holzer E."/>
            <person name="Brandt A."/>
            <person name="Peters S."/>
            <person name="van Staveren M."/>
            <person name="Dirkse W."/>
            <person name="Mooijman P."/>
            <person name="Klein Lankhorst R."/>
            <person name="Rose M."/>
            <person name="Hauf J."/>
            <person name="Koetter P."/>
            <person name="Berneiser S."/>
            <person name="Hempel S."/>
            <person name="Feldpausch M."/>
            <person name="Lamberth S."/>
            <person name="Van den Daele H."/>
            <person name="De Keyser A."/>
            <person name="Buysshaert C."/>
            <person name="Gielen J."/>
            <person name="Villarroel R."/>
            <person name="De Clercq R."/>
            <person name="van Montagu M."/>
            <person name="Rogers J."/>
            <person name="Cronin A."/>
            <person name="Quail M.A."/>
            <person name="Bray-Allen S."/>
            <person name="Clark L."/>
            <person name="Doggett J."/>
            <person name="Hall S."/>
            <person name="Kay M."/>
            <person name="Lennard N."/>
            <person name="McLay K."/>
            <person name="Mayes R."/>
            <person name="Pettett A."/>
            <person name="Rajandream M.A."/>
            <person name="Lyne M."/>
            <person name="Benes V."/>
            <person name="Rechmann S."/>
            <person name="Borkova D."/>
            <person name="Bloecker H."/>
            <person name="Scharfe M."/>
            <person name="Grimm M."/>
            <person name="Loehnert T.-H."/>
            <person name="Dose S."/>
            <person name="de Haan M."/>
            <person name="Maarse A.C."/>
            <person name="Schaefer M."/>
            <person name="Mueller-Auer S."/>
            <person name="Gabel C."/>
            <person name="Fuchs M."/>
            <person name="Fartmann B."/>
            <person name="Granderath K."/>
            <person name="Dauner D."/>
            <person name="Herzl A."/>
            <person name="Neumann S."/>
            <person name="Argiriou A."/>
            <person name="Vitale D."/>
            <person name="Liguori R."/>
            <person name="Piravandi E."/>
            <person name="Massenet O."/>
            <person name="Quigley F."/>
            <person name="Clabauld G."/>
            <person name="Muendlein A."/>
            <person name="Felber R."/>
            <person name="Schnabl S."/>
            <person name="Hiller R."/>
            <person name="Schmidt W."/>
            <person name="Lecharny A."/>
            <person name="Aubourg S."/>
            <person name="Chefdor F."/>
            <person name="Cooke R."/>
            <person name="Berger C."/>
            <person name="Monfort A."/>
            <person name="Casacuberta E."/>
            <person name="Gibbons T."/>
            <person name="Weber N."/>
            <person name="Vandenbol M."/>
            <person name="Bargues M."/>
            <person name="Terol J."/>
            <person name="Torres A."/>
            <person name="Perez-Perez A."/>
            <person name="Purnelle B."/>
            <person name="Bent E."/>
            <person name="Johnson S."/>
            <person name="Tacon D."/>
            <person name="Jesse T."/>
            <person name="Heijnen L."/>
            <person name="Schwarz S."/>
            <person name="Scholler P."/>
            <person name="Heber S."/>
            <person name="Francs P."/>
            <person name="Bielke C."/>
            <person name="Frishman D."/>
            <person name="Haase D."/>
            <person name="Lemcke K."/>
            <person name="Mewes H.-W."/>
            <person name="Stocker S."/>
            <person name="Zaccaria P."/>
            <person name="Bevan M."/>
            <person name="Wilson R.K."/>
            <person name="de la Bastide M."/>
            <person name="Habermann K."/>
            <person name="Parnell L."/>
            <person name="Dedhia N."/>
            <person name="Gnoj L."/>
            <person name="Schutz K."/>
            <person name="Huang E."/>
            <person name="Spiegel L."/>
            <person name="Sekhon M."/>
            <person name="Murray J."/>
            <person name="Sheet P."/>
            <person name="Cordes M."/>
            <person name="Abu-Threideh J."/>
            <person name="Stoneking T."/>
            <person name="Kalicki J."/>
            <person name="Graves T."/>
            <person name="Harmon G."/>
            <person name="Edwards J."/>
            <person name="Latreille P."/>
            <person name="Courtney L."/>
            <person name="Cloud J."/>
            <person name="Abbott A."/>
            <person name="Scott K."/>
            <person name="Johnson D."/>
            <person name="Minx P."/>
            <person name="Bentley D."/>
            <person name="Fulton B."/>
            <person name="Miller N."/>
            <person name="Greco T."/>
            <person name="Kemp K."/>
            <person name="Kramer J."/>
            <person name="Fulton L."/>
            <person name="Mardis E."/>
            <person name="Dante M."/>
            <person name="Pepin K."/>
            <person name="Hillier L.W."/>
            <person name="Nelson J."/>
            <person name="Spieth J."/>
            <person name="Ryan E."/>
            <person name="Andrews S."/>
            <person name="Geisel C."/>
            <person name="Layman D."/>
            <person name="Du H."/>
            <person name="Ali J."/>
            <person name="Berghoff A."/>
            <person name="Jones K."/>
            <person name="Drone K."/>
            <person name="Cotton M."/>
            <person name="Joshu C."/>
            <person name="Antonoiu B."/>
            <person name="Zidanic M."/>
            <person name="Strong C."/>
            <person name="Sun H."/>
            <person name="Lamar B."/>
            <person name="Yordan C."/>
            <person name="Ma P."/>
            <person name="Zhong J."/>
            <person name="Preston R."/>
            <person name="Vil D."/>
            <person name="Shekher M."/>
            <person name="Matero A."/>
            <person name="Shah R."/>
            <person name="Swaby I.K."/>
            <person name="O'Shaughnessy A."/>
            <person name="Rodriguez M."/>
            <person name="Hoffman J."/>
            <person name="Till S."/>
            <person name="Granat S."/>
            <person name="Shohdy N."/>
            <person name="Hasegawa A."/>
            <person name="Hameed A."/>
            <person name="Lodhi M."/>
            <person name="Johnson A."/>
            <person name="Chen E."/>
            <person name="Marra M.A."/>
            <person name="Martienssen R."/>
            <person name="McCombie W.R."/>
        </authorList>
    </citation>
    <scope>NUCLEOTIDE SEQUENCE [LARGE SCALE GENOMIC DNA]</scope>
    <source>
        <strain>cv. Columbia</strain>
    </source>
</reference>
<reference key="3">
    <citation type="journal article" date="2017" name="Plant J.">
        <title>Araport11: a complete reannotation of the Arabidopsis thaliana reference genome.</title>
        <authorList>
            <person name="Cheng C.Y."/>
            <person name="Krishnakumar V."/>
            <person name="Chan A.P."/>
            <person name="Thibaud-Nissen F."/>
            <person name="Schobel S."/>
            <person name="Town C.D."/>
        </authorList>
    </citation>
    <scope>GENOME REANNOTATION</scope>
    <source>
        <strain>cv. Columbia</strain>
    </source>
</reference>
<reference key="4">
    <citation type="journal article" date="2003" name="Science">
        <title>Empirical analysis of transcriptional activity in the Arabidopsis genome.</title>
        <authorList>
            <person name="Yamada K."/>
            <person name="Lim J."/>
            <person name="Dale J.M."/>
            <person name="Chen H."/>
            <person name="Shinn P."/>
            <person name="Palm C.J."/>
            <person name="Southwick A.M."/>
            <person name="Wu H.C."/>
            <person name="Kim C.J."/>
            <person name="Nguyen M."/>
            <person name="Pham P.K."/>
            <person name="Cheuk R.F."/>
            <person name="Karlin-Newmann G."/>
            <person name="Liu S.X."/>
            <person name="Lam B."/>
            <person name="Sakano H."/>
            <person name="Wu T."/>
            <person name="Yu G."/>
            <person name="Miranda M."/>
            <person name="Quach H.L."/>
            <person name="Tripp M."/>
            <person name="Chang C.H."/>
            <person name="Lee J.M."/>
            <person name="Toriumi M.J."/>
            <person name="Chan M.M."/>
            <person name="Tang C.C."/>
            <person name="Onodera C.S."/>
            <person name="Deng J.M."/>
            <person name="Akiyama K."/>
            <person name="Ansari Y."/>
            <person name="Arakawa T."/>
            <person name="Banh J."/>
            <person name="Banno F."/>
            <person name="Bowser L."/>
            <person name="Brooks S.Y."/>
            <person name="Carninci P."/>
            <person name="Chao Q."/>
            <person name="Choy N."/>
            <person name="Enju A."/>
            <person name="Goldsmith A.D."/>
            <person name="Gurjal M."/>
            <person name="Hansen N.F."/>
            <person name="Hayashizaki Y."/>
            <person name="Johnson-Hopson C."/>
            <person name="Hsuan V.W."/>
            <person name="Iida K."/>
            <person name="Karnes M."/>
            <person name="Khan S."/>
            <person name="Koesema E."/>
            <person name="Ishida J."/>
            <person name="Jiang P.X."/>
            <person name="Jones T."/>
            <person name="Kawai J."/>
            <person name="Kamiya A."/>
            <person name="Meyers C."/>
            <person name="Nakajima M."/>
            <person name="Narusaka M."/>
            <person name="Seki M."/>
            <person name="Sakurai T."/>
            <person name="Satou M."/>
            <person name="Tamse R."/>
            <person name="Vaysberg M."/>
            <person name="Wallender E.K."/>
            <person name="Wong C."/>
            <person name="Yamamura Y."/>
            <person name="Yuan S."/>
            <person name="Shinozaki K."/>
            <person name="Davis R.W."/>
            <person name="Theologis A."/>
            <person name="Ecker J.R."/>
        </authorList>
    </citation>
    <scope>NUCLEOTIDE SEQUENCE [LARGE SCALE MRNA]</scope>
    <source>
        <strain>cv. Columbia</strain>
    </source>
</reference>
<reference key="5">
    <citation type="submission" date="2006-07" db="EMBL/GenBank/DDBJ databases">
        <title>Large-scale analysis of RIKEN Arabidopsis full-length (RAFL) cDNAs.</title>
        <authorList>
            <person name="Totoki Y."/>
            <person name="Seki M."/>
            <person name="Ishida J."/>
            <person name="Nakajima M."/>
            <person name="Enju A."/>
            <person name="Kamiya A."/>
            <person name="Narusaka M."/>
            <person name="Shin-i T."/>
            <person name="Nakagawa M."/>
            <person name="Sakamoto N."/>
            <person name="Oishi K."/>
            <person name="Kohara Y."/>
            <person name="Kobayashi M."/>
            <person name="Toyoda A."/>
            <person name="Sakaki Y."/>
            <person name="Sakurai T."/>
            <person name="Iida K."/>
            <person name="Akiyama K."/>
            <person name="Satou M."/>
            <person name="Toyoda T."/>
            <person name="Konagaya A."/>
            <person name="Carninci P."/>
            <person name="Kawai J."/>
            <person name="Hayashizaki Y."/>
            <person name="Shinozaki K."/>
        </authorList>
    </citation>
    <scope>NUCLEOTIDE SEQUENCE [LARGE SCALE MRNA]</scope>
    <source>
        <strain>cv. Columbia</strain>
    </source>
</reference>
<reference key="6">
    <citation type="submission" date="2002-03" db="EMBL/GenBank/DDBJ databases">
        <title>Full-length cDNA from Arabidopsis thaliana.</title>
        <authorList>
            <person name="Brover V.V."/>
            <person name="Troukhan M.E."/>
            <person name="Alexandrov N.A."/>
            <person name="Lu Y.-P."/>
            <person name="Flavell R.B."/>
            <person name="Feldmann K.A."/>
        </authorList>
    </citation>
    <scope>NUCLEOTIDE SEQUENCE [LARGE SCALE MRNA]</scope>
</reference>
<reference key="7">
    <citation type="submission" date="2009-03" db="EMBL/GenBank/DDBJ databases">
        <title>ORF cloning and analysis of Arabidopsis transcription factor genes.</title>
        <authorList>
            <person name="Fujita M."/>
            <person name="Mizukado S."/>
            <person name="Seki M."/>
            <person name="Shinozaki K."/>
            <person name="Mitsuda N."/>
            <person name="Takiguchi Y."/>
            <person name="Takagi M."/>
        </authorList>
    </citation>
    <scope>NUCLEOTIDE SEQUENCE [LARGE SCALE MRNA]</scope>
</reference>
<reference key="8">
    <citation type="journal article" date="2006" name="Plant Physiol.">
        <title>NUCLEAR FUSION DEFECTIVE1 encodes the Arabidopsis RPL21M protein and is required for karyogamy during female gametophyte development and fertilization.</title>
        <authorList>
            <person name="Portereiko M.F."/>
            <person name="Sandaklie-Nikolova L."/>
            <person name="Lloyd A."/>
            <person name="Dever C.A."/>
            <person name="Otsuga D."/>
            <person name="Drews G.N."/>
        </authorList>
    </citation>
    <scope>FUNCTION</scope>
    <scope>DISRUPTION PHENOTYPE</scope>
    <scope>SUBCELLULAR LOCATION</scope>
    <scope>TISSUE SPECIFICITY</scope>
    <source>
        <strain>cv. Columbia</strain>
    </source>
</reference>
<reference key="9">
    <citation type="journal article" date="2023" name="Plant Cell">
        <title>An updated nomenclature for plant ribosomal protein genes.</title>
        <authorList>
            <person name="Scarpin M.R."/>
            <person name="Busche M."/>
            <person name="Martinez R.E."/>
            <person name="Harper L.C."/>
            <person name="Reiser L."/>
            <person name="Szakonyi D."/>
            <person name="Merchante C."/>
            <person name="Lan T."/>
            <person name="Xiong W."/>
            <person name="Mo B."/>
            <person name="Tang G."/>
            <person name="Chen X."/>
            <person name="Bailey-Serres J."/>
            <person name="Browning K.S."/>
            <person name="Brunkard J.O."/>
        </authorList>
    </citation>
    <scope>NOMENCLATURE</scope>
</reference>
<feature type="transit peptide" description="Mitochondrion" evidence="2">
    <location>
        <begin position="1"/>
        <end position="68"/>
    </location>
</feature>
<feature type="chain" id="PRO_0000030482" description="Large ribosomal subunit protein bL21m">
    <location>
        <begin position="69"/>
        <end position="270"/>
    </location>
</feature>
<feature type="region of interest" description="Disordered" evidence="3">
    <location>
        <begin position="68"/>
        <end position="113"/>
    </location>
</feature>
<feature type="compositionally biased region" description="Acidic residues" evidence="3">
    <location>
        <begin position="75"/>
        <end position="101"/>
    </location>
</feature>
<feature type="compositionally biased region" description="Basic and acidic residues" evidence="3">
    <location>
        <begin position="102"/>
        <end position="113"/>
    </location>
</feature>
<proteinExistence type="evidence at protein level"/>
<evidence type="ECO:0000250" key="1"/>
<evidence type="ECO:0000255" key="2"/>
<evidence type="ECO:0000256" key="3">
    <source>
        <dbReference type="SAM" id="MobiDB-lite"/>
    </source>
</evidence>
<evidence type="ECO:0000269" key="4">
    <source>
    </source>
</evidence>
<evidence type="ECO:0000269" key="5">
    <source>
    </source>
</evidence>
<evidence type="ECO:0000303" key="6">
    <source>
    </source>
</evidence>
<evidence type="ECO:0000303" key="7">
    <source>
    </source>
</evidence>
<evidence type="ECO:0000303" key="8">
    <source>
    </source>
</evidence>
<evidence type="ECO:0000305" key="9"/>
<evidence type="ECO:0000312" key="10">
    <source>
        <dbReference type="Araport" id="AT4G30930"/>
    </source>
</evidence>